<name>SYH_CAUVC</name>
<feature type="chain" id="PRO_0000136133" description="Histidine--tRNA ligase">
    <location>
        <begin position="1"/>
        <end position="495"/>
    </location>
</feature>
<feature type="region of interest" description="Disordered" evidence="2">
    <location>
        <begin position="1"/>
        <end position="24"/>
    </location>
</feature>
<feature type="compositionally biased region" description="Polar residues" evidence="2">
    <location>
        <begin position="1"/>
        <end position="10"/>
    </location>
</feature>
<feature type="compositionally biased region" description="Basic and acidic residues" evidence="2">
    <location>
        <begin position="12"/>
        <end position="24"/>
    </location>
</feature>
<keyword id="KW-0030">Aminoacyl-tRNA synthetase</keyword>
<keyword id="KW-0067">ATP-binding</keyword>
<keyword id="KW-0963">Cytoplasm</keyword>
<keyword id="KW-0436">Ligase</keyword>
<keyword id="KW-0547">Nucleotide-binding</keyword>
<keyword id="KW-0648">Protein biosynthesis</keyword>
<keyword id="KW-1185">Reference proteome</keyword>
<comment type="catalytic activity">
    <reaction>
        <text>tRNA(His) + L-histidine + ATP = L-histidyl-tRNA(His) + AMP + diphosphate + H(+)</text>
        <dbReference type="Rhea" id="RHEA:17313"/>
        <dbReference type="Rhea" id="RHEA-COMP:9665"/>
        <dbReference type="Rhea" id="RHEA-COMP:9689"/>
        <dbReference type="ChEBI" id="CHEBI:15378"/>
        <dbReference type="ChEBI" id="CHEBI:30616"/>
        <dbReference type="ChEBI" id="CHEBI:33019"/>
        <dbReference type="ChEBI" id="CHEBI:57595"/>
        <dbReference type="ChEBI" id="CHEBI:78442"/>
        <dbReference type="ChEBI" id="CHEBI:78527"/>
        <dbReference type="ChEBI" id="CHEBI:456215"/>
        <dbReference type="EC" id="6.1.1.21"/>
    </reaction>
</comment>
<comment type="subunit">
    <text evidence="1">Homodimer.</text>
</comment>
<comment type="subcellular location">
    <subcellularLocation>
        <location evidence="1">Cytoplasm</location>
    </subcellularLocation>
</comment>
<comment type="similarity">
    <text evidence="3">Belongs to the class-II aminoacyl-tRNA synthetase family.</text>
</comment>
<protein>
    <recommendedName>
        <fullName>Histidine--tRNA ligase</fullName>
        <ecNumber>6.1.1.21</ecNumber>
    </recommendedName>
    <alternativeName>
        <fullName>Histidyl-tRNA synthetase</fullName>
        <shortName>HisRS</shortName>
    </alternativeName>
</protein>
<evidence type="ECO:0000250" key="1"/>
<evidence type="ECO:0000256" key="2">
    <source>
        <dbReference type="SAM" id="MobiDB-lite"/>
    </source>
</evidence>
<evidence type="ECO:0000305" key="3"/>
<gene>
    <name type="primary">hisS</name>
    <name type="ordered locus">CC_3513</name>
</gene>
<proteinExistence type="inferred from homology"/>
<organism>
    <name type="scientific">Caulobacter vibrioides (strain ATCC 19089 / CIP 103742 / CB 15)</name>
    <name type="common">Caulobacter crescentus</name>
    <dbReference type="NCBI Taxonomy" id="190650"/>
    <lineage>
        <taxon>Bacteria</taxon>
        <taxon>Pseudomonadati</taxon>
        <taxon>Pseudomonadota</taxon>
        <taxon>Alphaproteobacteria</taxon>
        <taxon>Caulobacterales</taxon>
        <taxon>Caulobacteraceae</taxon>
        <taxon>Caulobacter</taxon>
    </lineage>
</organism>
<accession>Q9A2P3</accession>
<sequence length="495" mass="52521">MTTDSEQPNTDFRPEARAPRGFADKRARDLRAERAILEAVSAVYERYGFEALDTGAFEYADALGKFLPDSDRPNEGVFALQDDDDQWMALRYDLTAPLARFAAQNWETLPKPFRRYAFGPVWRNEKPGPGRFRQFIQCDADTVGSARPEADAEIIAMAVEGLEAAGLPRGTAVLKINNRKLLNGLLTAAGADSAGQKLAVLRAVDKLDRLGVDGVRLLLGEGRLDESGDFTKGAGLKGKAVDQVLDFVQAGSTGGRAATLDNIARVVAGSAEGDEGLLELSRIDAALSSLGIADDQAFIDPSIVRGLEYYTGAVFEAELLLSTTDEKGNKVSFGSIGGGGRYDDLVARFTGNVTPATGFSFGVSRLAAALRAAGREPGGAARGPVVVITFDQAHMGEYFSVVGQLRAAGIAAEVYLGTSGMKPQMKYADRRGAPAVVMLGGDEIAAGTVTIKDLDAGRMAAEGLTDNAAWKAERPGQQTIPRDQLVDAVRKIIGG</sequence>
<dbReference type="EC" id="6.1.1.21"/>
<dbReference type="EMBL" id="AE005673">
    <property type="protein sequence ID" value="AAK25475.1"/>
    <property type="molecule type" value="Genomic_DNA"/>
</dbReference>
<dbReference type="PIR" id="G87684">
    <property type="entry name" value="G87684"/>
</dbReference>
<dbReference type="RefSeq" id="NP_422307.1">
    <property type="nucleotide sequence ID" value="NC_002696.2"/>
</dbReference>
<dbReference type="RefSeq" id="WP_010921342.1">
    <property type="nucleotide sequence ID" value="NC_002696.2"/>
</dbReference>
<dbReference type="SMR" id="Q9A2P3"/>
<dbReference type="STRING" id="190650.CC_3513"/>
<dbReference type="EnsemblBacteria" id="AAK25475">
    <property type="protein sequence ID" value="AAK25475"/>
    <property type="gene ID" value="CC_3513"/>
</dbReference>
<dbReference type="KEGG" id="ccr:CC_3513"/>
<dbReference type="PATRIC" id="fig|190650.5.peg.3523"/>
<dbReference type="eggNOG" id="COG0124">
    <property type="taxonomic scope" value="Bacteria"/>
</dbReference>
<dbReference type="HOGENOM" id="CLU_025113_3_2_5"/>
<dbReference type="BioCyc" id="CAULO:CC3513-MONOMER"/>
<dbReference type="Proteomes" id="UP000001816">
    <property type="component" value="Chromosome"/>
</dbReference>
<dbReference type="GO" id="GO:0005737">
    <property type="term" value="C:cytoplasm"/>
    <property type="evidence" value="ECO:0007669"/>
    <property type="project" value="UniProtKB-SubCell"/>
</dbReference>
<dbReference type="GO" id="GO:0005524">
    <property type="term" value="F:ATP binding"/>
    <property type="evidence" value="ECO:0007669"/>
    <property type="project" value="UniProtKB-UniRule"/>
</dbReference>
<dbReference type="GO" id="GO:0004821">
    <property type="term" value="F:histidine-tRNA ligase activity"/>
    <property type="evidence" value="ECO:0007669"/>
    <property type="project" value="UniProtKB-UniRule"/>
</dbReference>
<dbReference type="GO" id="GO:0006427">
    <property type="term" value="P:histidyl-tRNA aminoacylation"/>
    <property type="evidence" value="ECO:0007669"/>
    <property type="project" value="UniProtKB-UniRule"/>
</dbReference>
<dbReference type="CDD" id="cd00773">
    <property type="entry name" value="HisRS-like_core"/>
    <property type="match status" value="1"/>
</dbReference>
<dbReference type="CDD" id="cd00859">
    <property type="entry name" value="HisRS_anticodon"/>
    <property type="match status" value="1"/>
</dbReference>
<dbReference type="Gene3D" id="3.40.50.800">
    <property type="entry name" value="Anticodon-binding domain"/>
    <property type="match status" value="1"/>
</dbReference>
<dbReference type="Gene3D" id="3.30.930.10">
    <property type="entry name" value="Bira Bifunctional Protein, Domain 2"/>
    <property type="match status" value="1"/>
</dbReference>
<dbReference type="HAMAP" id="MF_00127">
    <property type="entry name" value="His_tRNA_synth"/>
    <property type="match status" value="1"/>
</dbReference>
<dbReference type="InterPro" id="IPR006195">
    <property type="entry name" value="aa-tRNA-synth_II"/>
</dbReference>
<dbReference type="InterPro" id="IPR045864">
    <property type="entry name" value="aa-tRNA-synth_II/BPL/LPL"/>
</dbReference>
<dbReference type="InterPro" id="IPR004154">
    <property type="entry name" value="Anticodon-bd"/>
</dbReference>
<dbReference type="InterPro" id="IPR036621">
    <property type="entry name" value="Anticodon-bd_dom_sf"/>
</dbReference>
<dbReference type="InterPro" id="IPR015807">
    <property type="entry name" value="His-tRNA-ligase"/>
</dbReference>
<dbReference type="InterPro" id="IPR041715">
    <property type="entry name" value="HisRS-like_core"/>
</dbReference>
<dbReference type="InterPro" id="IPR004516">
    <property type="entry name" value="HisRS/HisZ"/>
</dbReference>
<dbReference type="InterPro" id="IPR033656">
    <property type="entry name" value="HisRS_anticodon"/>
</dbReference>
<dbReference type="NCBIfam" id="TIGR00442">
    <property type="entry name" value="hisS"/>
    <property type="match status" value="1"/>
</dbReference>
<dbReference type="PANTHER" id="PTHR11476:SF7">
    <property type="entry name" value="HISTIDINE--TRNA LIGASE"/>
    <property type="match status" value="1"/>
</dbReference>
<dbReference type="PANTHER" id="PTHR11476">
    <property type="entry name" value="HISTIDYL-TRNA SYNTHETASE"/>
    <property type="match status" value="1"/>
</dbReference>
<dbReference type="Pfam" id="PF03129">
    <property type="entry name" value="HGTP_anticodon"/>
    <property type="match status" value="1"/>
</dbReference>
<dbReference type="Pfam" id="PF13393">
    <property type="entry name" value="tRNA-synt_His"/>
    <property type="match status" value="1"/>
</dbReference>
<dbReference type="PIRSF" id="PIRSF001549">
    <property type="entry name" value="His-tRNA_synth"/>
    <property type="match status" value="1"/>
</dbReference>
<dbReference type="SUPFAM" id="SSF52954">
    <property type="entry name" value="Class II aaRS ABD-related"/>
    <property type="match status" value="1"/>
</dbReference>
<dbReference type="SUPFAM" id="SSF55681">
    <property type="entry name" value="Class II aaRS and biotin synthetases"/>
    <property type="match status" value="1"/>
</dbReference>
<dbReference type="PROSITE" id="PS50862">
    <property type="entry name" value="AA_TRNA_LIGASE_II"/>
    <property type="match status" value="1"/>
</dbReference>
<reference key="1">
    <citation type="journal article" date="2001" name="Proc. Natl. Acad. Sci. U.S.A.">
        <title>Complete genome sequence of Caulobacter crescentus.</title>
        <authorList>
            <person name="Nierman W.C."/>
            <person name="Feldblyum T.V."/>
            <person name="Laub M.T."/>
            <person name="Paulsen I.T."/>
            <person name="Nelson K.E."/>
            <person name="Eisen J.A."/>
            <person name="Heidelberg J.F."/>
            <person name="Alley M.R.K."/>
            <person name="Ohta N."/>
            <person name="Maddock J.R."/>
            <person name="Potocka I."/>
            <person name="Nelson W.C."/>
            <person name="Newton A."/>
            <person name="Stephens C."/>
            <person name="Phadke N.D."/>
            <person name="Ely B."/>
            <person name="DeBoy R.T."/>
            <person name="Dodson R.J."/>
            <person name="Durkin A.S."/>
            <person name="Gwinn M.L."/>
            <person name="Haft D.H."/>
            <person name="Kolonay J.F."/>
            <person name="Smit J."/>
            <person name="Craven M.B."/>
            <person name="Khouri H.M."/>
            <person name="Shetty J."/>
            <person name="Berry K.J."/>
            <person name="Utterback T.R."/>
            <person name="Tran K."/>
            <person name="Wolf A.M."/>
            <person name="Vamathevan J.J."/>
            <person name="Ermolaeva M.D."/>
            <person name="White O."/>
            <person name="Salzberg S.L."/>
            <person name="Venter J.C."/>
            <person name="Shapiro L."/>
            <person name="Fraser C.M."/>
        </authorList>
    </citation>
    <scope>NUCLEOTIDE SEQUENCE [LARGE SCALE GENOMIC DNA]</scope>
    <source>
        <strain>ATCC 19089 / CIP 103742 / CB 15</strain>
    </source>
</reference>